<comment type="subcellular location">
    <subcellularLocation>
        <location evidence="1">Secreted</location>
    </subcellularLocation>
</comment>
<comment type="tissue specificity">
    <text>Expressed by the venom duct.</text>
</comment>
<comment type="domain">
    <text evidence="1">The presence of a 'disulfide through disulfide knot' structurally defines this protein as a knottin.</text>
</comment>
<comment type="domain">
    <text>The cysteine framework is VI/VII (C-C-CC-C-C).</text>
</comment>
<comment type="similarity">
    <text evidence="3">Belongs to the conotoxin O2 superfamily.</text>
</comment>
<reference key="1">
    <citation type="journal article" date="2001" name="Mol. Biol. Evol.">
        <title>Mechanisms for evolving hypervariability: the case of conopeptides.</title>
        <authorList>
            <person name="Conticello S.G."/>
            <person name="Gilad Y."/>
            <person name="Avidan N."/>
            <person name="Ben-Asher E."/>
            <person name="Levy Z."/>
            <person name="Fainzilber M."/>
        </authorList>
    </citation>
    <scope>NUCLEOTIDE SEQUENCE [MRNA]</scope>
    <source>
        <tissue>Venom duct</tissue>
    </source>
</reference>
<sequence length="74" mass="8427">MEKLTILLLVAAVLMSTQALIQEKRPKEKIKFLSKRKSIPESWWEGECSGWSVHCTQHSDCCSGECTGSYCELY</sequence>
<protein>
    <recommendedName>
        <fullName>Conotoxin VnMEKL-0222</fullName>
    </recommendedName>
</protein>
<keyword id="KW-1015">Disulfide bond</keyword>
<keyword id="KW-0960">Knottin</keyword>
<keyword id="KW-0528">Neurotoxin</keyword>
<keyword id="KW-0964">Secreted</keyword>
<keyword id="KW-0732">Signal</keyword>
<keyword id="KW-0800">Toxin</keyword>
<name>O262_CONVE</name>
<accession>Q9BPC9</accession>
<dbReference type="EMBL" id="AF215005">
    <property type="protein sequence ID" value="AAG60433.1"/>
    <property type="molecule type" value="mRNA"/>
</dbReference>
<dbReference type="SMR" id="Q9BPC9"/>
<dbReference type="ConoServer" id="692">
    <property type="toxin name" value="Vn6.2 precursor"/>
</dbReference>
<dbReference type="GO" id="GO:0005576">
    <property type="term" value="C:extracellular region"/>
    <property type="evidence" value="ECO:0007669"/>
    <property type="project" value="UniProtKB-SubCell"/>
</dbReference>
<dbReference type="GO" id="GO:0008200">
    <property type="term" value="F:ion channel inhibitor activity"/>
    <property type="evidence" value="ECO:0007669"/>
    <property type="project" value="InterPro"/>
</dbReference>
<dbReference type="GO" id="GO:0090729">
    <property type="term" value="F:toxin activity"/>
    <property type="evidence" value="ECO:0007669"/>
    <property type="project" value="UniProtKB-KW"/>
</dbReference>
<dbReference type="InterPro" id="IPR004214">
    <property type="entry name" value="Conotoxin"/>
</dbReference>
<dbReference type="Pfam" id="PF02950">
    <property type="entry name" value="Conotoxin"/>
    <property type="match status" value="1"/>
</dbReference>
<proteinExistence type="evidence at transcript level"/>
<evidence type="ECO:0000250" key="1"/>
<evidence type="ECO:0000255" key="2"/>
<evidence type="ECO:0000305" key="3"/>
<organism>
    <name type="scientific">Conus ventricosus</name>
    <name type="common">Mediterranean cone</name>
    <dbReference type="NCBI Taxonomy" id="117992"/>
    <lineage>
        <taxon>Eukaryota</taxon>
        <taxon>Metazoa</taxon>
        <taxon>Spiralia</taxon>
        <taxon>Lophotrochozoa</taxon>
        <taxon>Mollusca</taxon>
        <taxon>Gastropoda</taxon>
        <taxon>Caenogastropoda</taxon>
        <taxon>Neogastropoda</taxon>
        <taxon>Conoidea</taxon>
        <taxon>Conidae</taxon>
        <taxon>Conus</taxon>
        <taxon>Lautoconus</taxon>
    </lineage>
</organism>
<feature type="signal peptide" evidence="2">
    <location>
        <begin position="1"/>
        <end position="19"/>
    </location>
</feature>
<feature type="propeptide" id="PRO_0000404806" evidence="1">
    <location>
        <begin position="20"/>
        <end position="46"/>
    </location>
</feature>
<feature type="peptide" id="PRO_0000404807" description="Conotoxin VnMEKL-0222">
    <location>
        <begin position="47"/>
        <end position="74"/>
    </location>
</feature>
<feature type="disulfide bond" evidence="1">
    <location>
        <begin position="48"/>
        <end position="62"/>
    </location>
</feature>
<feature type="disulfide bond" evidence="1">
    <location>
        <begin position="55"/>
        <end position="66"/>
    </location>
</feature>
<feature type="disulfide bond" evidence="1">
    <location>
        <begin position="61"/>
        <end position="71"/>
    </location>
</feature>